<evidence type="ECO:0000255" key="1">
    <source>
        <dbReference type="HAMAP-Rule" id="MF_00020"/>
    </source>
</evidence>
<protein>
    <recommendedName>
        <fullName evidence="1">Acetate kinase</fullName>
        <ecNumber evidence="1">2.7.2.1</ecNumber>
    </recommendedName>
    <alternativeName>
        <fullName evidence="1">Acetokinase</fullName>
    </alternativeName>
</protein>
<gene>
    <name evidence="1" type="primary">ackA</name>
    <name type="ordered locus">SUN_1996</name>
</gene>
<keyword id="KW-0067">ATP-binding</keyword>
<keyword id="KW-0963">Cytoplasm</keyword>
<keyword id="KW-0418">Kinase</keyword>
<keyword id="KW-0460">Magnesium</keyword>
<keyword id="KW-0479">Metal-binding</keyword>
<keyword id="KW-0547">Nucleotide-binding</keyword>
<keyword id="KW-0808">Transferase</keyword>
<feature type="chain" id="PRO_1000002278" description="Acetate kinase">
    <location>
        <begin position="1"/>
        <end position="396"/>
    </location>
</feature>
<feature type="active site" description="Proton donor/acceptor" evidence="1">
    <location>
        <position position="143"/>
    </location>
</feature>
<feature type="binding site" evidence="1">
    <location>
        <position position="7"/>
    </location>
    <ligand>
        <name>Mg(2+)</name>
        <dbReference type="ChEBI" id="CHEBI:18420"/>
    </ligand>
</feature>
<feature type="binding site" evidence="1">
    <location>
        <position position="14"/>
    </location>
    <ligand>
        <name>ATP</name>
        <dbReference type="ChEBI" id="CHEBI:30616"/>
    </ligand>
</feature>
<feature type="binding site" evidence="1">
    <location>
        <position position="86"/>
    </location>
    <ligand>
        <name>substrate</name>
    </ligand>
</feature>
<feature type="binding site" evidence="1">
    <location>
        <begin position="203"/>
        <end position="207"/>
    </location>
    <ligand>
        <name>ATP</name>
        <dbReference type="ChEBI" id="CHEBI:30616"/>
    </ligand>
</feature>
<feature type="binding site" evidence="1">
    <location>
        <begin position="277"/>
        <end position="279"/>
    </location>
    <ligand>
        <name>ATP</name>
        <dbReference type="ChEBI" id="CHEBI:30616"/>
    </ligand>
</feature>
<feature type="binding site" evidence="1">
    <location>
        <begin position="325"/>
        <end position="329"/>
    </location>
    <ligand>
        <name>ATP</name>
        <dbReference type="ChEBI" id="CHEBI:30616"/>
    </ligand>
</feature>
<feature type="binding site" evidence="1">
    <location>
        <position position="380"/>
    </location>
    <ligand>
        <name>Mg(2+)</name>
        <dbReference type="ChEBI" id="CHEBI:18420"/>
    </ligand>
</feature>
<feature type="site" description="Transition state stabilizer" evidence="1">
    <location>
        <position position="175"/>
    </location>
</feature>
<feature type="site" description="Transition state stabilizer" evidence="1">
    <location>
        <position position="236"/>
    </location>
</feature>
<dbReference type="EC" id="2.7.2.1" evidence="1"/>
<dbReference type="EMBL" id="AP009179">
    <property type="protein sequence ID" value="BAF72939.1"/>
    <property type="molecule type" value="Genomic_DNA"/>
</dbReference>
<dbReference type="RefSeq" id="WP_012083758.1">
    <property type="nucleotide sequence ID" value="NC_009663.1"/>
</dbReference>
<dbReference type="SMR" id="A6QBT0"/>
<dbReference type="STRING" id="387093.SUN_1996"/>
<dbReference type="KEGG" id="sun:SUN_1996"/>
<dbReference type="eggNOG" id="COG0282">
    <property type="taxonomic scope" value="Bacteria"/>
</dbReference>
<dbReference type="HOGENOM" id="CLU_020352_0_1_7"/>
<dbReference type="OrthoDB" id="9802453at2"/>
<dbReference type="UniPathway" id="UPA00340">
    <property type="reaction ID" value="UER00458"/>
</dbReference>
<dbReference type="Proteomes" id="UP000006378">
    <property type="component" value="Chromosome"/>
</dbReference>
<dbReference type="GO" id="GO:0005737">
    <property type="term" value="C:cytoplasm"/>
    <property type="evidence" value="ECO:0007669"/>
    <property type="project" value="UniProtKB-SubCell"/>
</dbReference>
<dbReference type="GO" id="GO:0008776">
    <property type="term" value="F:acetate kinase activity"/>
    <property type="evidence" value="ECO:0007669"/>
    <property type="project" value="UniProtKB-UniRule"/>
</dbReference>
<dbReference type="GO" id="GO:0005524">
    <property type="term" value="F:ATP binding"/>
    <property type="evidence" value="ECO:0007669"/>
    <property type="project" value="UniProtKB-KW"/>
</dbReference>
<dbReference type="GO" id="GO:0000287">
    <property type="term" value="F:magnesium ion binding"/>
    <property type="evidence" value="ECO:0007669"/>
    <property type="project" value="UniProtKB-UniRule"/>
</dbReference>
<dbReference type="GO" id="GO:0006083">
    <property type="term" value="P:acetate metabolic process"/>
    <property type="evidence" value="ECO:0007669"/>
    <property type="project" value="TreeGrafter"/>
</dbReference>
<dbReference type="GO" id="GO:0006085">
    <property type="term" value="P:acetyl-CoA biosynthetic process"/>
    <property type="evidence" value="ECO:0007669"/>
    <property type="project" value="UniProtKB-UniRule"/>
</dbReference>
<dbReference type="CDD" id="cd24010">
    <property type="entry name" value="ASKHA_NBD_AcK_PK"/>
    <property type="match status" value="1"/>
</dbReference>
<dbReference type="Gene3D" id="3.30.420.40">
    <property type="match status" value="2"/>
</dbReference>
<dbReference type="HAMAP" id="MF_00020">
    <property type="entry name" value="Acetate_kinase"/>
    <property type="match status" value="1"/>
</dbReference>
<dbReference type="InterPro" id="IPR004372">
    <property type="entry name" value="Ac/propionate_kinase"/>
</dbReference>
<dbReference type="InterPro" id="IPR000890">
    <property type="entry name" value="Aliphatic_acid_kin_short-chain"/>
</dbReference>
<dbReference type="InterPro" id="IPR023865">
    <property type="entry name" value="Aliphatic_acid_kinase_CS"/>
</dbReference>
<dbReference type="InterPro" id="IPR043129">
    <property type="entry name" value="ATPase_NBD"/>
</dbReference>
<dbReference type="NCBIfam" id="TIGR00016">
    <property type="entry name" value="ackA"/>
    <property type="match status" value="1"/>
</dbReference>
<dbReference type="PANTHER" id="PTHR21060">
    <property type="entry name" value="ACETATE KINASE"/>
    <property type="match status" value="1"/>
</dbReference>
<dbReference type="PANTHER" id="PTHR21060:SF15">
    <property type="entry name" value="ACETATE KINASE-RELATED"/>
    <property type="match status" value="1"/>
</dbReference>
<dbReference type="Pfam" id="PF00871">
    <property type="entry name" value="Acetate_kinase"/>
    <property type="match status" value="1"/>
</dbReference>
<dbReference type="PIRSF" id="PIRSF000722">
    <property type="entry name" value="Acetate_prop_kin"/>
    <property type="match status" value="1"/>
</dbReference>
<dbReference type="PRINTS" id="PR00471">
    <property type="entry name" value="ACETATEKNASE"/>
</dbReference>
<dbReference type="SUPFAM" id="SSF53067">
    <property type="entry name" value="Actin-like ATPase domain"/>
    <property type="match status" value="2"/>
</dbReference>
<dbReference type="PROSITE" id="PS01075">
    <property type="entry name" value="ACETATE_KINASE_1"/>
    <property type="match status" value="1"/>
</dbReference>
<dbReference type="PROSITE" id="PS01076">
    <property type="entry name" value="ACETATE_KINASE_2"/>
    <property type="match status" value="1"/>
</dbReference>
<reference key="1">
    <citation type="journal article" date="2007" name="Proc. Natl. Acad. Sci. U.S.A.">
        <title>Deep-sea vent epsilon-proteobacterial genomes provide insights into emergence of pathogens.</title>
        <authorList>
            <person name="Nakagawa S."/>
            <person name="Takaki Y."/>
            <person name="Shimamura S."/>
            <person name="Reysenbach A.-L."/>
            <person name="Takai K."/>
            <person name="Horikoshi K."/>
        </authorList>
    </citation>
    <scope>NUCLEOTIDE SEQUENCE [LARGE SCALE GENOMIC DNA]</scope>
    <source>
        <strain>NBC37-1</strain>
    </source>
</reference>
<proteinExistence type="inferred from homology"/>
<sequence>MKVLVLNAGSSSLKCQYFIDEESIASVTIERIGEKESYTLLTYANEKREHTSTVKNHHDAIDTLFSLLKESHIITDVTELNAVGHRIVHGGPHFSRPTLINTEVIEQIRSLIPLAPLHNPSNLEGIEVIAKVYPALKQVAVFDTAFHQTMPEYAARYPLPYDLYEEAHVRRYGFHGTSHAYVAKEAAKILQQPLETLNLITLHLGNGASATAIKKGRSIDTSMGMTPLEGLMMGSRSGDIDPAIIPYLVRTQKIDVETIDSMLNKESGLKGVCGNNDMREIIDKMDEGDEKSRLALEMYVYRIKKYIGAYSATLGHVDALVFTGGIGEHAALVREMVCEGMEYTFGIILEKKKNDSAKQEASAIHSRESRTDILVIPTDEELEIVRQTEVIVSRLS</sequence>
<name>ACKA_SULNB</name>
<organism>
    <name type="scientific">Sulfurovum sp. (strain NBC37-1)</name>
    <dbReference type="NCBI Taxonomy" id="387093"/>
    <lineage>
        <taxon>Bacteria</taxon>
        <taxon>Pseudomonadati</taxon>
        <taxon>Campylobacterota</taxon>
        <taxon>Epsilonproteobacteria</taxon>
        <taxon>Campylobacterales</taxon>
        <taxon>Sulfurovaceae</taxon>
        <taxon>Sulfurovum</taxon>
    </lineage>
</organism>
<comment type="function">
    <text evidence="1">Catalyzes the formation of acetyl phosphate from acetate and ATP. Can also catalyze the reverse reaction.</text>
</comment>
<comment type="catalytic activity">
    <reaction evidence="1">
        <text>acetate + ATP = acetyl phosphate + ADP</text>
        <dbReference type="Rhea" id="RHEA:11352"/>
        <dbReference type="ChEBI" id="CHEBI:22191"/>
        <dbReference type="ChEBI" id="CHEBI:30089"/>
        <dbReference type="ChEBI" id="CHEBI:30616"/>
        <dbReference type="ChEBI" id="CHEBI:456216"/>
        <dbReference type="EC" id="2.7.2.1"/>
    </reaction>
</comment>
<comment type="cofactor">
    <cofactor evidence="1">
        <name>Mg(2+)</name>
        <dbReference type="ChEBI" id="CHEBI:18420"/>
    </cofactor>
    <cofactor evidence="1">
        <name>Mn(2+)</name>
        <dbReference type="ChEBI" id="CHEBI:29035"/>
    </cofactor>
    <text evidence="1">Mg(2+). Can also accept Mn(2+).</text>
</comment>
<comment type="pathway">
    <text evidence="1">Metabolic intermediate biosynthesis; acetyl-CoA biosynthesis; acetyl-CoA from acetate: step 1/2.</text>
</comment>
<comment type="subunit">
    <text evidence="1">Homodimer.</text>
</comment>
<comment type="subcellular location">
    <subcellularLocation>
        <location evidence="1">Cytoplasm</location>
    </subcellularLocation>
</comment>
<comment type="similarity">
    <text evidence="1">Belongs to the acetokinase family.</text>
</comment>
<accession>A6QBT0</accession>